<gene>
    <name evidence="5" type="ordered locus">MMP0704</name>
</gene>
<organism>
    <name type="scientific">Methanococcus maripaludis (strain DSM 14266 / JCM 13030 / NBRC 101832 / S2 / LL)</name>
    <dbReference type="NCBI Taxonomy" id="267377"/>
    <lineage>
        <taxon>Archaea</taxon>
        <taxon>Methanobacteriati</taxon>
        <taxon>Methanobacteriota</taxon>
        <taxon>Methanomada group</taxon>
        <taxon>Methanococci</taxon>
        <taxon>Methanococcales</taxon>
        <taxon>Methanococcaceae</taxon>
        <taxon>Methanococcus</taxon>
    </lineage>
</organism>
<feature type="chain" id="PRO_0000433953" description="Iron-sulfur cluster carrier protein">
    <location>
        <begin position="1"/>
        <end position="289"/>
    </location>
</feature>
<feature type="region of interest" description="Disordered" evidence="2">
    <location>
        <begin position="1"/>
        <end position="20"/>
    </location>
</feature>
<feature type="compositionally biased region" description="Low complexity" evidence="2">
    <location>
        <begin position="1"/>
        <end position="18"/>
    </location>
</feature>
<feature type="binding site" evidence="1">
    <location>
        <begin position="48"/>
        <end position="55"/>
    </location>
    <ligand>
        <name>ATP</name>
        <dbReference type="ChEBI" id="CHEBI:30616"/>
    </ligand>
</feature>
<feature type="mutagenesis site" description="Decrease in activity. Lack of activity; when associated with A-221." evidence="3">
    <original>C</original>
    <variation>A</variation>
    <location>
        <position position="218"/>
    </location>
</feature>
<feature type="mutagenesis site" description="Decrease in activity. Lack of activity; when associated with A-218." evidence="3">
    <original>C</original>
    <variation>A</variation>
    <location>
        <position position="221"/>
    </location>
</feature>
<keyword id="KW-0067">ATP-binding</keyword>
<keyword id="KW-0378">Hydrolase</keyword>
<keyword id="KW-0408">Iron</keyword>
<keyword id="KW-0411">Iron-sulfur</keyword>
<keyword id="KW-0479">Metal-binding</keyword>
<keyword id="KW-0547">Nucleotide-binding</keyword>
<keyword id="KW-1185">Reference proteome</keyword>
<sequence length="289" mass="31034">MAEECSGNCDSCGSSSDCSDTKKMMEQQNAQIRDNMSKIKYKIAVMSGKGGVGKSTVTVNLAATLNMMGYKVGVLDGDIHGPNIPQMLGVDQIQPMADENGIYPVSTPQGIKTMSIGYFLPDKNTPIIWRGPKASGAIRQFLSDVNWGELDFLLIDTPPGSGDIQITTLQAIPDIDGVVIVTTPEEVSVLDARKSVSAANTLEIPIIGIVENMGGFVCPECDKVIDIFGKGGGEKAAKELNVFFLGRIPLDIKARVASDRGVPMVTMDCKASEEFKKVVNTVLERIKKE</sequence>
<comment type="function">
    <text evidence="1 3">Binds and transfers iron-sulfur (Fe-S) clusters to target apoproteins. Can hydrolyze ATP.</text>
</comment>
<comment type="subunit">
    <text evidence="1 3">Homodimer.</text>
</comment>
<comment type="domain">
    <text evidence="3">The N-terminal cysteine-rich ferredoxin-like domain is not required for activity.</text>
</comment>
<comment type="similarity">
    <text evidence="1">Belongs to the Mrp/NBP35 ATP-binding proteins family.</text>
</comment>
<protein>
    <recommendedName>
        <fullName evidence="1 4">Iron-sulfur cluster carrier protein</fullName>
    </recommendedName>
</protein>
<accession>Q6LZC5</accession>
<name>APBC_METMP</name>
<evidence type="ECO:0000255" key="1">
    <source>
        <dbReference type="HAMAP-Rule" id="MF_02040"/>
    </source>
</evidence>
<evidence type="ECO:0000256" key="2">
    <source>
        <dbReference type="SAM" id="MobiDB-lite"/>
    </source>
</evidence>
<evidence type="ECO:0000269" key="3">
    <source>
    </source>
</evidence>
<evidence type="ECO:0000303" key="4">
    <source>
    </source>
</evidence>
<evidence type="ECO:0000312" key="5">
    <source>
        <dbReference type="EMBL" id="CAF30260.1"/>
    </source>
</evidence>
<reference key="1">
    <citation type="journal article" date="2004" name="J. Bacteriol.">
        <title>Complete genome sequence of the genetically tractable hydrogenotrophic methanogen Methanococcus maripaludis.</title>
        <authorList>
            <person name="Hendrickson E.L."/>
            <person name="Kaul R."/>
            <person name="Zhou Y."/>
            <person name="Bovee D."/>
            <person name="Chapman P."/>
            <person name="Chung J."/>
            <person name="Conway de Macario E."/>
            <person name="Dodsworth J.A."/>
            <person name="Gillett W."/>
            <person name="Graham D.E."/>
            <person name="Hackett M."/>
            <person name="Haydock A.K."/>
            <person name="Kang A."/>
            <person name="Land M.L."/>
            <person name="Levy R."/>
            <person name="Lie T.J."/>
            <person name="Major T.A."/>
            <person name="Moore B.C."/>
            <person name="Porat I."/>
            <person name="Palmeiri A."/>
            <person name="Rouse G."/>
            <person name="Saenphimmachak C."/>
            <person name="Soell D."/>
            <person name="Van Dien S."/>
            <person name="Wang T."/>
            <person name="Whitman W.B."/>
            <person name="Xia Q."/>
            <person name="Zhang Y."/>
            <person name="Larimer F.W."/>
            <person name="Olson M.V."/>
            <person name="Leigh J.A."/>
        </authorList>
    </citation>
    <scope>NUCLEOTIDE SEQUENCE [LARGE SCALE GENOMIC DNA]</scope>
    <source>
        <strain>DSM 14266 / JCM 13030 / NBRC 101832 / S2 / LL</strain>
    </source>
</reference>
<reference key="2">
    <citation type="journal article" date="2009" name="J. Bacteriol.">
        <title>Archaeal ApbC/Nbp35 homologs function as iron-sulfur cluster carrier proteins.</title>
        <authorList>
            <person name="Boyd J.M."/>
            <person name="Drevland R.M."/>
            <person name="Downs D.M."/>
            <person name="Graham D.E."/>
        </authorList>
    </citation>
    <scope>FUNCTION</scope>
    <scope>SUBUNIT</scope>
    <scope>DOMAIN</scope>
    <scope>MUTAGENESIS OF CYS-218 AND CYS-221</scope>
    <source>
        <strain>S900</strain>
    </source>
</reference>
<proteinExistence type="evidence at protein level"/>
<dbReference type="EMBL" id="BX950229">
    <property type="protein sequence ID" value="CAF30260.1"/>
    <property type="molecule type" value="Genomic_DNA"/>
</dbReference>
<dbReference type="RefSeq" id="WP_011170648.1">
    <property type="nucleotide sequence ID" value="NC_005791.1"/>
</dbReference>
<dbReference type="SMR" id="Q6LZC5"/>
<dbReference type="STRING" id="267377.MMP0704"/>
<dbReference type="EnsemblBacteria" id="CAF30260">
    <property type="protein sequence ID" value="CAF30260"/>
    <property type="gene ID" value="MMP0704"/>
</dbReference>
<dbReference type="GeneID" id="37875235"/>
<dbReference type="KEGG" id="mmp:MMP0704"/>
<dbReference type="PATRIC" id="fig|267377.15.peg.721"/>
<dbReference type="eggNOG" id="arCOG00585">
    <property type="taxonomic scope" value="Archaea"/>
</dbReference>
<dbReference type="HOGENOM" id="CLU_024839_0_1_2"/>
<dbReference type="OrthoDB" id="8297at2157"/>
<dbReference type="Proteomes" id="UP000000590">
    <property type="component" value="Chromosome"/>
</dbReference>
<dbReference type="GO" id="GO:0005829">
    <property type="term" value="C:cytosol"/>
    <property type="evidence" value="ECO:0007669"/>
    <property type="project" value="TreeGrafter"/>
</dbReference>
<dbReference type="GO" id="GO:0005524">
    <property type="term" value="F:ATP binding"/>
    <property type="evidence" value="ECO:0007669"/>
    <property type="project" value="UniProtKB-UniRule"/>
</dbReference>
<dbReference type="GO" id="GO:0016887">
    <property type="term" value="F:ATP hydrolysis activity"/>
    <property type="evidence" value="ECO:0007669"/>
    <property type="project" value="UniProtKB-UniRule"/>
</dbReference>
<dbReference type="GO" id="GO:0140663">
    <property type="term" value="F:ATP-dependent FeS chaperone activity"/>
    <property type="evidence" value="ECO:0007669"/>
    <property type="project" value="InterPro"/>
</dbReference>
<dbReference type="GO" id="GO:0051536">
    <property type="term" value="F:iron-sulfur cluster binding"/>
    <property type="evidence" value="ECO:0007669"/>
    <property type="project" value="UniProtKB-UniRule"/>
</dbReference>
<dbReference type="GO" id="GO:0046872">
    <property type="term" value="F:metal ion binding"/>
    <property type="evidence" value="ECO:0007669"/>
    <property type="project" value="UniProtKB-KW"/>
</dbReference>
<dbReference type="GO" id="GO:0016226">
    <property type="term" value="P:iron-sulfur cluster assembly"/>
    <property type="evidence" value="ECO:0007669"/>
    <property type="project" value="InterPro"/>
</dbReference>
<dbReference type="CDD" id="cd02037">
    <property type="entry name" value="Mrp_NBP35"/>
    <property type="match status" value="1"/>
</dbReference>
<dbReference type="FunFam" id="3.40.50.300:FF:001119">
    <property type="entry name" value="Iron-sulfur cluster carrier protein"/>
    <property type="match status" value="1"/>
</dbReference>
<dbReference type="Gene3D" id="3.40.50.300">
    <property type="entry name" value="P-loop containing nucleotide triphosphate hydrolases"/>
    <property type="match status" value="1"/>
</dbReference>
<dbReference type="HAMAP" id="MF_02040">
    <property type="entry name" value="Mrp_NBP35"/>
    <property type="match status" value="1"/>
</dbReference>
<dbReference type="InterPro" id="IPR019591">
    <property type="entry name" value="Mrp/NBP35_ATP-bd"/>
</dbReference>
<dbReference type="InterPro" id="IPR027417">
    <property type="entry name" value="P-loop_NTPase"/>
</dbReference>
<dbReference type="InterPro" id="IPR033756">
    <property type="entry name" value="YlxH/NBP35"/>
</dbReference>
<dbReference type="PANTHER" id="PTHR23264:SF19">
    <property type="entry name" value="CYTOSOLIC FE-S CLUSTER ASSEMBLY FACTOR NUBP2"/>
    <property type="match status" value="1"/>
</dbReference>
<dbReference type="PANTHER" id="PTHR23264">
    <property type="entry name" value="NUCLEOTIDE-BINDING PROTEIN NBP35 YEAST -RELATED"/>
    <property type="match status" value="1"/>
</dbReference>
<dbReference type="Pfam" id="PF10609">
    <property type="entry name" value="ParA"/>
    <property type="match status" value="1"/>
</dbReference>
<dbReference type="SUPFAM" id="SSF52540">
    <property type="entry name" value="P-loop containing nucleoside triphosphate hydrolases"/>
    <property type="match status" value="1"/>
</dbReference>